<dbReference type="EMBL" id="M35027">
    <property type="protein sequence ID" value="AAA48225.1"/>
    <property type="molecule type" value="Genomic_DNA"/>
</dbReference>
<dbReference type="EMBL" id="M35027">
    <property type="protein sequence ID" value="AAA47976.1"/>
    <property type="molecule type" value="Genomic_DNA"/>
</dbReference>
<dbReference type="PIR" id="F42528">
    <property type="entry name" value="F42528"/>
</dbReference>
<dbReference type="SMR" id="P21103"/>
<dbReference type="Proteomes" id="UP000008269">
    <property type="component" value="Segment"/>
</dbReference>
<dbReference type="Gene3D" id="1.25.40.20">
    <property type="entry name" value="Ankyrin repeat-containing domain"/>
    <property type="match status" value="1"/>
</dbReference>
<dbReference type="InterPro" id="IPR002110">
    <property type="entry name" value="Ankyrin_rpt"/>
</dbReference>
<dbReference type="InterPro" id="IPR036770">
    <property type="entry name" value="Ankyrin_rpt-contain_sf"/>
</dbReference>
<dbReference type="SMART" id="SM00248">
    <property type="entry name" value="ANK"/>
    <property type="match status" value="2"/>
</dbReference>
<dbReference type="SUPFAM" id="SSF48403">
    <property type="entry name" value="Ankyrin repeat"/>
    <property type="match status" value="1"/>
</dbReference>
<keyword id="KW-1185">Reference proteome</keyword>
<accession>P21103</accession>
<protein>
    <recommendedName>
        <fullName>Truncated Ankyrin repeat protein OPG003</fullName>
    </recommendedName>
</protein>
<proteinExistence type="inferred from homology"/>
<organism>
    <name type="scientific">Vaccinia virus (strain Copenhagen)</name>
    <name type="common">VACV</name>
    <dbReference type="NCBI Taxonomy" id="10249"/>
    <lineage>
        <taxon>Viruses</taxon>
        <taxon>Varidnaviria</taxon>
        <taxon>Bamfordvirae</taxon>
        <taxon>Nucleocytoviricota</taxon>
        <taxon>Pokkesviricetes</taxon>
        <taxon>Chitovirales</taxon>
        <taxon>Poxviridae</taxon>
        <taxon>Chordopoxvirinae</taxon>
        <taxon>Orthopoxvirus</taxon>
        <taxon>Vaccinia virus</taxon>
    </lineage>
</organism>
<feature type="chain" id="PRO_0000099419" description="Truncated Ankyrin repeat protein OPG003">
    <location>
        <begin position="1"/>
        <end position="259"/>
    </location>
</feature>
<organismHost>
    <name type="scientific">Homo sapiens</name>
    <name type="common">Human</name>
    <dbReference type="NCBI Taxonomy" id="9606"/>
</organismHost>
<name>PG003_VACCC</name>
<sequence length="259" mass="30526">MSRINITKKIYCSVFLFLFLFLSYISNYEKVNDEMYEMGEMDEIVSIVRDSMWYIPNVFMDDGKNEGHVSVNNVCHMYFTFFDVDTSSHLFKLVIKHCDLNKRGNSPLHCYTMNTRFNPSVLKILLHHGMRNFDSKDEKGHHYLIHSLSIDNKIFDILTDTIDDFSKSSDLLLCYLRYKFNGSLNYYVLYKGSDPNCADEDELTSLHYYCKHISTFYKSNYYKLSHTKMRAEKRFIYAIIDYGANINAVTHLPSTVYQT</sequence>
<comment type="miscellaneous">
    <text>The N-terminus of this protein is hydrophobic.</text>
</comment>
<comment type="similarity">
    <text evidence="1">Belongs to the orthopoxvirus OPG003 family.</text>
</comment>
<evidence type="ECO:0000305" key="1"/>
<gene>
    <name type="primary">OPG003</name>
    <name type="ORF">B25R</name>
</gene>
<gene>
    <name type="ORF">C19L</name>
</gene>
<reference key="1">
    <citation type="journal article" date="1990" name="Virology">
        <title>The complete DNA sequence of vaccinia virus.</title>
        <authorList>
            <person name="Goebel S.J."/>
            <person name="Johnson G.P."/>
            <person name="Perkus M.E."/>
            <person name="Davis S.W."/>
            <person name="Winslow J.P."/>
            <person name="Paoletti E."/>
        </authorList>
    </citation>
    <scope>NUCLEOTIDE SEQUENCE [LARGE SCALE GENOMIC DNA]</scope>
</reference>
<reference key="2">
    <citation type="journal article" date="1990" name="Virology">
        <title>Appendix to 'The complete DNA sequence of vaccinia virus'.</title>
        <authorList>
            <person name="Goebel S.J."/>
            <person name="Johnson G.P."/>
            <person name="Perkus M.E."/>
            <person name="Davis S.W."/>
            <person name="Winslow J.P."/>
            <person name="Paoletti E."/>
        </authorList>
    </citation>
    <scope>COMPLETE GENOME</scope>
</reference>